<evidence type="ECO:0000255" key="1">
    <source>
        <dbReference type="HAMAP-Rule" id="MF_01006"/>
    </source>
</evidence>
<proteinExistence type="inferred from homology"/>
<comment type="function">
    <text evidence="1">Catalyzes the dephosphorylation of undecaprenyl diphosphate (UPP). Confers resistance to bacitracin.</text>
</comment>
<comment type="catalytic activity">
    <reaction evidence="1">
        <text>di-trans,octa-cis-undecaprenyl diphosphate + H2O = di-trans,octa-cis-undecaprenyl phosphate + phosphate + H(+)</text>
        <dbReference type="Rhea" id="RHEA:28094"/>
        <dbReference type="ChEBI" id="CHEBI:15377"/>
        <dbReference type="ChEBI" id="CHEBI:15378"/>
        <dbReference type="ChEBI" id="CHEBI:43474"/>
        <dbReference type="ChEBI" id="CHEBI:58405"/>
        <dbReference type="ChEBI" id="CHEBI:60392"/>
        <dbReference type="EC" id="3.6.1.27"/>
    </reaction>
</comment>
<comment type="subcellular location">
    <subcellularLocation>
        <location evidence="1">Cell membrane</location>
        <topology evidence="1">Multi-pass membrane protein</topology>
    </subcellularLocation>
</comment>
<comment type="miscellaneous">
    <text>Bacitracin is thought to be involved in the inhibition of peptidoglycan synthesis by sequestering undecaprenyl diphosphate, thereby reducing the pool of lipid carrier available.</text>
</comment>
<comment type="similarity">
    <text evidence="1">Belongs to the UppP family.</text>
</comment>
<gene>
    <name evidence="1" type="primary">uppP</name>
    <name type="synonym">bacA</name>
    <name type="synonym">upk</name>
    <name type="ordered locus">SpyM3_0205</name>
</gene>
<sequence>MLIIELLKAIFFGIIEGITEWLPVSSTGHLILVQEFIRLNQDKAFIEMFNIVIQLGAIIAVMLIYFERLNPFQPGKTAREVQLTWQLWLKVVIACIPSILIAVPLDNWFEAHFYFMVPIAIALIVYGIAFIWIEKRNAQQEPAVTELARMSYKTAFFIGCFQVLSIVPGTSRSGATILGAIILGTSRTVAADFTFFLAIPTMFGYSGLKAVKFFLDGHHLDFAQVLILLVASLTAFVVSLLAIRFLTDYVKKHDFTIFGKYRIVLGSLLLIYSFFKFVF</sequence>
<feature type="chain" id="PRO_0000151217" description="Undecaprenyl-diphosphatase">
    <location>
        <begin position="1"/>
        <end position="279"/>
    </location>
</feature>
<feature type="transmembrane region" description="Helical" evidence="1">
    <location>
        <begin position="2"/>
        <end position="22"/>
    </location>
</feature>
<feature type="transmembrane region" description="Helical" evidence="1">
    <location>
        <begin position="44"/>
        <end position="64"/>
    </location>
</feature>
<feature type="transmembrane region" description="Helical" evidence="1">
    <location>
        <begin position="85"/>
        <end position="105"/>
    </location>
</feature>
<feature type="transmembrane region" description="Helical" evidence="1">
    <location>
        <begin position="113"/>
        <end position="133"/>
    </location>
</feature>
<feature type="transmembrane region" description="Helical" evidence="1">
    <location>
        <begin position="163"/>
        <end position="183"/>
    </location>
</feature>
<feature type="transmembrane region" description="Helical" evidence="1">
    <location>
        <begin position="188"/>
        <end position="208"/>
    </location>
</feature>
<feature type="transmembrane region" description="Helical" evidence="1">
    <location>
        <begin position="223"/>
        <end position="243"/>
    </location>
</feature>
<feature type="transmembrane region" description="Helical" evidence="1">
    <location>
        <begin position="255"/>
        <end position="275"/>
    </location>
</feature>
<organism>
    <name type="scientific">Streptococcus pyogenes serotype M3 (strain ATCC BAA-595 / MGAS315)</name>
    <dbReference type="NCBI Taxonomy" id="198466"/>
    <lineage>
        <taxon>Bacteria</taxon>
        <taxon>Bacillati</taxon>
        <taxon>Bacillota</taxon>
        <taxon>Bacilli</taxon>
        <taxon>Lactobacillales</taxon>
        <taxon>Streptococcaceae</taxon>
        <taxon>Streptococcus</taxon>
    </lineage>
</organism>
<protein>
    <recommendedName>
        <fullName evidence="1">Undecaprenyl-diphosphatase</fullName>
        <ecNumber evidence="1">3.6.1.27</ecNumber>
    </recommendedName>
    <alternativeName>
        <fullName evidence="1">Bacitracin resistance protein</fullName>
    </alternativeName>
    <alternativeName>
        <fullName evidence="1">Undecaprenyl pyrophosphate phosphatase</fullName>
    </alternativeName>
</protein>
<accession>P0DH30</accession>
<accession>P67393</accession>
<accession>Q9A1G8</accession>
<reference key="1">
    <citation type="journal article" date="2002" name="Proc. Natl. Acad. Sci. U.S.A.">
        <title>Genome sequence of a serotype M3 strain of group A Streptococcus: phage-encoded toxins, the high-virulence phenotype, and clone emergence.</title>
        <authorList>
            <person name="Beres S.B."/>
            <person name="Sylva G.L."/>
            <person name="Barbian K.D."/>
            <person name="Lei B."/>
            <person name="Hoff J.S."/>
            <person name="Mammarella N.D."/>
            <person name="Liu M.-Y."/>
            <person name="Smoot J.C."/>
            <person name="Porcella S.F."/>
            <person name="Parkins L.D."/>
            <person name="Campbell D.S."/>
            <person name="Smith T.M."/>
            <person name="McCormick J.K."/>
            <person name="Leung D.Y.M."/>
            <person name="Schlievert P.M."/>
            <person name="Musser J.M."/>
        </authorList>
    </citation>
    <scope>NUCLEOTIDE SEQUENCE [LARGE SCALE GENOMIC DNA]</scope>
    <source>
        <strain>ATCC BAA-595 / MGAS315</strain>
    </source>
</reference>
<name>UPPP_STRP3</name>
<keyword id="KW-0046">Antibiotic resistance</keyword>
<keyword id="KW-1003">Cell membrane</keyword>
<keyword id="KW-0133">Cell shape</keyword>
<keyword id="KW-0961">Cell wall biogenesis/degradation</keyword>
<keyword id="KW-0378">Hydrolase</keyword>
<keyword id="KW-0472">Membrane</keyword>
<keyword id="KW-0573">Peptidoglycan synthesis</keyword>
<keyword id="KW-0812">Transmembrane</keyword>
<keyword id="KW-1133">Transmembrane helix</keyword>
<dbReference type="EC" id="3.6.1.27" evidence="1"/>
<dbReference type="EMBL" id="AE014074">
    <property type="protein sequence ID" value="AAM78812.1"/>
    <property type="molecule type" value="Genomic_DNA"/>
</dbReference>
<dbReference type="RefSeq" id="WP_002986031.1">
    <property type="nucleotide sequence ID" value="NC_004070.1"/>
</dbReference>
<dbReference type="SMR" id="P0DH30"/>
<dbReference type="KEGG" id="spg:SpyM3_0205"/>
<dbReference type="HOGENOM" id="CLU_060296_2_0_9"/>
<dbReference type="Proteomes" id="UP000000564">
    <property type="component" value="Chromosome"/>
</dbReference>
<dbReference type="GO" id="GO:0005886">
    <property type="term" value="C:plasma membrane"/>
    <property type="evidence" value="ECO:0007669"/>
    <property type="project" value="UniProtKB-SubCell"/>
</dbReference>
<dbReference type="GO" id="GO:0050380">
    <property type="term" value="F:undecaprenyl-diphosphatase activity"/>
    <property type="evidence" value="ECO:0007669"/>
    <property type="project" value="UniProtKB-UniRule"/>
</dbReference>
<dbReference type="GO" id="GO:0071555">
    <property type="term" value="P:cell wall organization"/>
    <property type="evidence" value="ECO:0007669"/>
    <property type="project" value="UniProtKB-KW"/>
</dbReference>
<dbReference type="GO" id="GO:0009252">
    <property type="term" value="P:peptidoglycan biosynthetic process"/>
    <property type="evidence" value="ECO:0007669"/>
    <property type="project" value="UniProtKB-KW"/>
</dbReference>
<dbReference type="GO" id="GO:0008360">
    <property type="term" value="P:regulation of cell shape"/>
    <property type="evidence" value="ECO:0007669"/>
    <property type="project" value="UniProtKB-KW"/>
</dbReference>
<dbReference type="GO" id="GO:0046677">
    <property type="term" value="P:response to antibiotic"/>
    <property type="evidence" value="ECO:0007669"/>
    <property type="project" value="UniProtKB-UniRule"/>
</dbReference>
<dbReference type="HAMAP" id="MF_01006">
    <property type="entry name" value="Undec_diphosphatase"/>
    <property type="match status" value="1"/>
</dbReference>
<dbReference type="InterPro" id="IPR003824">
    <property type="entry name" value="UppP"/>
</dbReference>
<dbReference type="NCBIfam" id="NF001391">
    <property type="entry name" value="PRK00281.1-5"/>
    <property type="match status" value="1"/>
</dbReference>
<dbReference type="PANTHER" id="PTHR30622">
    <property type="entry name" value="UNDECAPRENYL-DIPHOSPHATASE"/>
    <property type="match status" value="1"/>
</dbReference>
<dbReference type="PANTHER" id="PTHR30622:SF3">
    <property type="entry name" value="UNDECAPRENYL-DIPHOSPHATASE"/>
    <property type="match status" value="1"/>
</dbReference>
<dbReference type="Pfam" id="PF02673">
    <property type="entry name" value="BacA"/>
    <property type="match status" value="1"/>
</dbReference>